<gene>
    <name evidence="1" type="primary">rsmG</name>
    <name type="ordered locus">Dvul_1812</name>
</gene>
<accession>A1VEG3</accession>
<organism>
    <name type="scientific">Nitratidesulfovibrio vulgaris (strain DP4)</name>
    <name type="common">Desulfovibrio vulgaris</name>
    <dbReference type="NCBI Taxonomy" id="391774"/>
    <lineage>
        <taxon>Bacteria</taxon>
        <taxon>Pseudomonadati</taxon>
        <taxon>Thermodesulfobacteriota</taxon>
        <taxon>Desulfovibrionia</taxon>
        <taxon>Desulfovibrionales</taxon>
        <taxon>Desulfovibrionaceae</taxon>
        <taxon>Nitratidesulfovibrio</taxon>
    </lineage>
</organism>
<reference key="1">
    <citation type="journal article" date="2009" name="Environ. Microbiol.">
        <title>Contribution of mobile genetic elements to Desulfovibrio vulgaris genome plasticity.</title>
        <authorList>
            <person name="Walker C.B."/>
            <person name="Stolyar S."/>
            <person name="Chivian D."/>
            <person name="Pinel N."/>
            <person name="Gabster J.A."/>
            <person name="Dehal P.S."/>
            <person name="He Z."/>
            <person name="Yang Z.K."/>
            <person name="Yen H.C."/>
            <person name="Zhou J."/>
            <person name="Wall J.D."/>
            <person name="Hazen T.C."/>
            <person name="Arkin A.P."/>
            <person name="Stahl D.A."/>
        </authorList>
    </citation>
    <scope>NUCLEOTIDE SEQUENCE [LARGE SCALE GENOMIC DNA]</scope>
    <source>
        <strain>DP4</strain>
    </source>
</reference>
<comment type="function">
    <text evidence="1">Specifically methylates the N7 position of guanine in position 527 of 16S rRNA.</text>
</comment>
<comment type="catalytic activity">
    <reaction evidence="1">
        <text>guanosine(527) in 16S rRNA + S-adenosyl-L-methionine = N(7)-methylguanosine(527) in 16S rRNA + S-adenosyl-L-homocysteine</text>
        <dbReference type="Rhea" id="RHEA:42732"/>
        <dbReference type="Rhea" id="RHEA-COMP:10209"/>
        <dbReference type="Rhea" id="RHEA-COMP:10210"/>
        <dbReference type="ChEBI" id="CHEBI:57856"/>
        <dbReference type="ChEBI" id="CHEBI:59789"/>
        <dbReference type="ChEBI" id="CHEBI:74269"/>
        <dbReference type="ChEBI" id="CHEBI:74480"/>
        <dbReference type="EC" id="2.1.1.170"/>
    </reaction>
</comment>
<comment type="subcellular location">
    <subcellularLocation>
        <location evidence="1">Cytoplasm</location>
    </subcellularLocation>
</comment>
<comment type="similarity">
    <text evidence="1">Belongs to the methyltransferase superfamily. RNA methyltransferase RsmG family.</text>
</comment>
<sequence length="218" mass="24221">MAGRVEVSRKELTKFCREAGFEPSPGMLEAIAGYLELLLHWNRSMNLVGTRTWQDTFHTLVVDSLHLAAFLDTLPLPPEPEVWDLGAGAGLPGIPLRAAWQRGNYTMVEAREKRAMFLRMALARHPLPGTNVFQGRAEAFMPSRPPADLVVSRAFMPWRELLDFVSGHLAPGGQVVFLSLDPVPASLPEGWAVEAESLYGTRCGGRYFWSLRPIIVPN</sequence>
<keyword id="KW-0963">Cytoplasm</keyword>
<keyword id="KW-0489">Methyltransferase</keyword>
<keyword id="KW-0698">rRNA processing</keyword>
<keyword id="KW-0949">S-adenosyl-L-methionine</keyword>
<keyword id="KW-0808">Transferase</keyword>
<name>RSMG_NITV4</name>
<feature type="chain" id="PRO_0000342914" description="Ribosomal RNA small subunit methyltransferase G">
    <location>
        <begin position="1"/>
        <end position="218"/>
    </location>
</feature>
<feature type="binding site" evidence="1">
    <location>
        <position position="86"/>
    </location>
    <ligand>
        <name>S-adenosyl-L-methionine</name>
        <dbReference type="ChEBI" id="CHEBI:59789"/>
    </ligand>
</feature>
<feature type="binding site" evidence="1">
    <location>
        <position position="91"/>
    </location>
    <ligand>
        <name>S-adenosyl-L-methionine</name>
        <dbReference type="ChEBI" id="CHEBI:59789"/>
    </ligand>
</feature>
<feature type="binding site" evidence="1">
    <location>
        <begin position="137"/>
        <end position="138"/>
    </location>
    <ligand>
        <name>S-adenosyl-L-methionine</name>
        <dbReference type="ChEBI" id="CHEBI:59789"/>
    </ligand>
</feature>
<feature type="binding site" evidence="1">
    <location>
        <position position="153"/>
    </location>
    <ligand>
        <name>S-adenosyl-L-methionine</name>
        <dbReference type="ChEBI" id="CHEBI:59789"/>
    </ligand>
</feature>
<proteinExistence type="inferred from homology"/>
<protein>
    <recommendedName>
        <fullName evidence="1">Ribosomal RNA small subunit methyltransferase G</fullName>
        <ecNumber evidence="1">2.1.1.170</ecNumber>
    </recommendedName>
    <alternativeName>
        <fullName evidence="1">16S rRNA 7-methylguanosine methyltransferase</fullName>
        <shortName evidence="1">16S rRNA m7G methyltransferase</shortName>
    </alternativeName>
</protein>
<evidence type="ECO:0000255" key="1">
    <source>
        <dbReference type="HAMAP-Rule" id="MF_00074"/>
    </source>
</evidence>
<dbReference type="EC" id="2.1.1.170" evidence="1"/>
<dbReference type="EMBL" id="CP000527">
    <property type="protein sequence ID" value="ABM28829.1"/>
    <property type="molecule type" value="Genomic_DNA"/>
</dbReference>
<dbReference type="RefSeq" id="WP_010938546.1">
    <property type="nucleotide sequence ID" value="NC_008751.1"/>
</dbReference>
<dbReference type="SMR" id="A1VEG3"/>
<dbReference type="KEGG" id="dvl:Dvul_1812"/>
<dbReference type="HOGENOM" id="CLU_065341_2_3_7"/>
<dbReference type="Proteomes" id="UP000009173">
    <property type="component" value="Chromosome"/>
</dbReference>
<dbReference type="GO" id="GO:0005829">
    <property type="term" value="C:cytosol"/>
    <property type="evidence" value="ECO:0007669"/>
    <property type="project" value="TreeGrafter"/>
</dbReference>
<dbReference type="GO" id="GO:0070043">
    <property type="term" value="F:rRNA (guanine-N7-)-methyltransferase activity"/>
    <property type="evidence" value="ECO:0007669"/>
    <property type="project" value="UniProtKB-UniRule"/>
</dbReference>
<dbReference type="CDD" id="cd02440">
    <property type="entry name" value="AdoMet_MTases"/>
    <property type="match status" value="1"/>
</dbReference>
<dbReference type="Gene3D" id="3.40.50.150">
    <property type="entry name" value="Vaccinia Virus protein VP39"/>
    <property type="match status" value="1"/>
</dbReference>
<dbReference type="HAMAP" id="MF_00074">
    <property type="entry name" value="16SrRNA_methyltr_G"/>
    <property type="match status" value="1"/>
</dbReference>
<dbReference type="InterPro" id="IPR003682">
    <property type="entry name" value="rRNA_ssu_MeTfrase_G"/>
</dbReference>
<dbReference type="InterPro" id="IPR029063">
    <property type="entry name" value="SAM-dependent_MTases_sf"/>
</dbReference>
<dbReference type="PANTHER" id="PTHR31760">
    <property type="entry name" value="S-ADENOSYL-L-METHIONINE-DEPENDENT METHYLTRANSFERASES SUPERFAMILY PROTEIN"/>
    <property type="match status" value="1"/>
</dbReference>
<dbReference type="PANTHER" id="PTHR31760:SF0">
    <property type="entry name" value="S-ADENOSYL-L-METHIONINE-DEPENDENT METHYLTRANSFERASES SUPERFAMILY PROTEIN"/>
    <property type="match status" value="1"/>
</dbReference>
<dbReference type="Pfam" id="PF02527">
    <property type="entry name" value="GidB"/>
    <property type="match status" value="1"/>
</dbReference>
<dbReference type="SUPFAM" id="SSF53335">
    <property type="entry name" value="S-adenosyl-L-methionine-dependent methyltransferases"/>
    <property type="match status" value="1"/>
</dbReference>